<dbReference type="EC" id="2.7.11.24" evidence="2"/>
<dbReference type="EMBL" id="AF185278">
    <property type="protein sequence ID" value="AAF24231.2"/>
    <property type="molecule type" value="Genomic_DNA"/>
</dbReference>
<dbReference type="EMBL" id="CR382137">
    <property type="protein sequence ID" value="CAG88486.2"/>
    <property type="molecule type" value="Genomic_DNA"/>
</dbReference>
<dbReference type="RefSeq" id="XP_460213.2">
    <property type="nucleotide sequence ID" value="XM_460213.1"/>
</dbReference>
<dbReference type="SMR" id="Q9UV50"/>
<dbReference type="FunCoup" id="Q9UV50">
    <property type="interactions" value="747"/>
</dbReference>
<dbReference type="STRING" id="284592.Q9UV50"/>
<dbReference type="GeneID" id="2902985"/>
<dbReference type="KEGG" id="dha:DEHA2E20944g"/>
<dbReference type="VEuPathDB" id="FungiDB:DEHA2E20944g"/>
<dbReference type="eggNOG" id="KOG0660">
    <property type="taxonomic scope" value="Eukaryota"/>
</dbReference>
<dbReference type="HOGENOM" id="CLU_000288_181_1_1"/>
<dbReference type="InParanoid" id="Q9UV50"/>
<dbReference type="OMA" id="NRYTDLN"/>
<dbReference type="OrthoDB" id="192887at2759"/>
<dbReference type="Proteomes" id="UP000000599">
    <property type="component" value="Chromosome E"/>
</dbReference>
<dbReference type="GO" id="GO:0000785">
    <property type="term" value="C:chromatin"/>
    <property type="evidence" value="ECO:0007669"/>
    <property type="project" value="EnsemblFungi"/>
</dbReference>
<dbReference type="GO" id="GO:0005758">
    <property type="term" value="C:mitochondrial intermembrane space"/>
    <property type="evidence" value="ECO:0007669"/>
    <property type="project" value="EnsemblFungi"/>
</dbReference>
<dbReference type="GO" id="GO:0005634">
    <property type="term" value="C:nucleus"/>
    <property type="evidence" value="ECO:0007669"/>
    <property type="project" value="UniProtKB-SubCell"/>
</dbReference>
<dbReference type="GO" id="GO:0005524">
    <property type="term" value="F:ATP binding"/>
    <property type="evidence" value="ECO:0007669"/>
    <property type="project" value="UniProtKB-KW"/>
</dbReference>
<dbReference type="GO" id="GO:0005516">
    <property type="term" value="F:calmodulin binding"/>
    <property type="evidence" value="ECO:0007669"/>
    <property type="project" value="EnsemblFungi"/>
</dbReference>
<dbReference type="GO" id="GO:0003682">
    <property type="term" value="F:chromatin binding"/>
    <property type="evidence" value="ECO:0007669"/>
    <property type="project" value="EnsemblFungi"/>
</dbReference>
<dbReference type="GO" id="GO:0004707">
    <property type="term" value="F:MAP kinase activity"/>
    <property type="evidence" value="ECO:0007669"/>
    <property type="project" value="UniProtKB-EC"/>
</dbReference>
<dbReference type="GO" id="GO:0106310">
    <property type="term" value="F:protein serine kinase activity"/>
    <property type="evidence" value="ECO:0007669"/>
    <property type="project" value="RHEA"/>
</dbReference>
<dbReference type="GO" id="GO:0008353">
    <property type="term" value="F:RNA polymerase II CTD heptapeptide repeat kinase activity"/>
    <property type="evidence" value="ECO:0007669"/>
    <property type="project" value="EnsemblFungi"/>
</dbReference>
<dbReference type="GO" id="GO:0071474">
    <property type="term" value="P:cellular hyperosmotic response"/>
    <property type="evidence" value="ECO:0007669"/>
    <property type="project" value="EnsemblFungi"/>
</dbReference>
<dbReference type="GO" id="GO:0034599">
    <property type="term" value="P:cellular response to oxidative stress"/>
    <property type="evidence" value="ECO:0007669"/>
    <property type="project" value="EnsemblFungi"/>
</dbReference>
<dbReference type="GO" id="GO:0030447">
    <property type="term" value="P:filamentous growth"/>
    <property type="evidence" value="ECO:0007669"/>
    <property type="project" value="UniProtKB-ARBA"/>
</dbReference>
<dbReference type="GO" id="GO:1990625">
    <property type="term" value="P:negative regulation of cytoplasmic translational initiation in response to stress"/>
    <property type="evidence" value="ECO:0007669"/>
    <property type="project" value="EnsemblFungi"/>
</dbReference>
<dbReference type="GO" id="GO:0001100">
    <property type="term" value="P:negative regulation of exit from mitosis"/>
    <property type="evidence" value="ECO:0007669"/>
    <property type="project" value="EnsemblFungi"/>
</dbReference>
<dbReference type="GO" id="GO:0010972">
    <property type="term" value="P:negative regulation of G2/M transition of mitotic cell cycle"/>
    <property type="evidence" value="ECO:0007669"/>
    <property type="project" value="EnsemblFungi"/>
</dbReference>
<dbReference type="GO" id="GO:0010515">
    <property type="term" value="P:negative regulation of induction of conjugation with cellular fusion"/>
    <property type="evidence" value="ECO:0007669"/>
    <property type="project" value="EnsemblFungi"/>
</dbReference>
<dbReference type="GO" id="GO:0007231">
    <property type="term" value="P:osmosensory signaling pathway"/>
    <property type="evidence" value="ECO:0007669"/>
    <property type="project" value="EnsemblFungi"/>
</dbReference>
<dbReference type="GO" id="GO:0038066">
    <property type="term" value="P:p38MAPK cascade"/>
    <property type="evidence" value="ECO:0007669"/>
    <property type="project" value="EnsemblFungi"/>
</dbReference>
<dbReference type="GO" id="GO:0010971">
    <property type="term" value="P:positive regulation of G2/M transition of mitotic cell cycle"/>
    <property type="evidence" value="ECO:0007669"/>
    <property type="project" value="EnsemblFungi"/>
</dbReference>
<dbReference type="GO" id="GO:0042307">
    <property type="term" value="P:positive regulation of protein import into nucleus"/>
    <property type="evidence" value="ECO:0007669"/>
    <property type="project" value="EnsemblFungi"/>
</dbReference>
<dbReference type="GO" id="GO:0045944">
    <property type="term" value="P:positive regulation of transcription by RNA polymerase II"/>
    <property type="evidence" value="ECO:0007669"/>
    <property type="project" value="EnsemblFungi"/>
</dbReference>
<dbReference type="GO" id="GO:1903715">
    <property type="term" value="P:regulation of aerobic respiration"/>
    <property type="evidence" value="ECO:0007669"/>
    <property type="project" value="EnsemblFungi"/>
</dbReference>
<dbReference type="GO" id="GO:0016241">
    <property type="term" value="P:regulation of macroautophagy"/>
    <property type="evidence" value="ECO:0007669"/>
    <property type="project" value="EnsemblFungi"/>
</dbReference>
<dbReference type="GO" id="GO:0051445">
    <property type="term" value="P:regulation of meiotic cell cycle"/>
    <property type="evidence" value="ECO:0007669"/>
    <property type="project" value="EnsemblFungi"/>
</dbReference>
<dbReference type="GO" id="GO:0033262">
    <property type="term" value="P:regulation of nuclear cell cycle DNA replication"/>
    <property type="evidence" value="ECO:0007669"/>
    <property type="project" value="EnsemblFungi"/>
</dbReference>
<dbReference type="GO" id="GO:0010520">
    <property type="term" value="P:regulation of reciprocal meiotic recombination"/>
    <property type="evidence" value="ECO:0007669"/>
    <property type="project" value="EnsemblFungi"/>
</dbReference>
<dbReference type="GO" id="GO:0051403">
    <property type="term" value="P:stress-activated MAPK cascade"/>
    <property type="evidence" value="ECO:0007669"/>
    <property type="project" value="InterPro"/>
</dbReference>
<dbReference type="CDD" id="cd07856">
    <property type="entry name" value="STKc_Sty1_Hog1"/>
    <property type="match status" value="1"/>
</dbReference>
<dbReference type="FunFam" id="1.10.510.10:FF:000049">
    <property type="entry name" value="Mitogen-activated protein kinase"/>
    <property type="match status" value="1"/>
</dbReference>
<dbReference type="FunFam" id="3.30.200.20:FF:000050">
    <property type="entry name" value="Mitogen-activated protein kinase"/>
    <property type="match status" value="1"/>
</dbReference>
<dbReference type="Gene3D" id="3.30.200.20">
    <property type="entry name" value="Phosphorylase Kinase, domain 1"/>
    <property type="match status" value="1"/>
</dbReference>
<dbReference type="Gene3D" id="1.10.510.10">
    <property type="entry name" value="Transferase(Phosphotransferase) domain 1"/>
    <property type="match status" value="1"/>
</dbReference>
<dbReference type="InterPro" id="IPR011009">
    <property type="entry name" value="Kinase-like_dom_sf"/>
</dbReference>
<dbReference type="InterPro" id="IPR050117">
    <property type="entry name" value="MAP_kinase"/>
</dbReference>
<dbReference type="InterPro" id="IPR003527">
    <property type="entry name" value="MAP_kinase_CS"/>
</dbReference>
<dbReference type="InterPro" id="IPR038783">
    <property type="entry name" value="MAPK_Sty1/Hog1"/>
</dbReference>
<dbReference type="InterPro" id="IPR000719">
    <property type="entry name" value="Prot_kinase_dom"/>
</dbReference>
<dbReference type="InterPro" id="IPR017441">
    <property type="entry name" value="Protein_kinase_ATP_BS"/>
</dbReference>
<dbReference type="InterPro" id="IPR008271">
    <property type="entry name" value="Ser/Thr_kinase_AS"/>
</dbReference>
<dbReference type="PANTHER" id="PTHR24055">
    <property type="entry name" value="MITOGEN-ACTIVATED PROTEIN KINASE"/>
    <property type="match status" value="1"/>
</dbReference>
<dbReference type="Pfam" id="PF00069">
    <property type="entry name" value="Pkinase"/>
    <property type="match status" value="1"/>
</dbReference>
<dbReference type="SMART" id="SM00220">
    <property type="entry name" value="S_TKc"/>
    <property type="match status" value="1"/>
</dbReference>
<dbReference type="SUPFAM" id="SSF56112">
    <property type="entry name" value="Protein kinase-like (PK-like)"/>
    <property type="match status" value="1"/>
</dbReference>
<dbReference type="PROSITE" id="PS01351">
    <property type="entry name" value="MAPK"/>
    <property type="match status" value="1"/>
</dbReference>
<dbReference type="PROSITE" id="PS00107">
    <property type="entry name" value="PROTEIN_KINASE_ATP"/>
    <property type="match status" value="1"/>
</dbReference>
<dbReference type="PROSITE" id="PS50011">
    <property type="entry name" value="PROTEIN_KINASE_DOM"/>
    <property type="match status" value="1"/>
</dbReference>
<dbReference type="PROSITE" id="PS00108">
    <property type="entry name" value="PROTEIN_KINASE_ST"/>
    <property type="match status" value="1"/>
</dbReference>
<feature type="chain" id="PRO_0000186330" description="Mitogen-activated protein kinase HOG1">
    <location>
        <begin position="1"/>
        <end position="387"/>
    </location>
</feature>
<feature type="domain" description="Protein kinase" evidence="4">
    <location>
        <begin position="23"/>
        <end position="305"/>
    </location>
</feature>
<feature type="region of interest" description="Disordered" evidence="6">
    <location>
        <begin position="360"/>
        <end position="387"/>
    </location>
</feature>
<feature type="short sequence motif" description="TXY">
    <location>
        <begin position="174"/>
        <end position="176"/>
    </location>
</feature>
<feature type="active site" description="Proton acceptor" evidence="4 5">
    <location>
        <position position="144"/>
    </location>
</feature>
<feature type="binding site" evidence="4">
    <location>
        <begin position="29"/>
        <end position="37"/>
    </location>
    <ligand>
        <name>ATP</name>
        <dbReference type="ChEBI" id="CHEBI:30616"/>
    </ligand>
</feature>
<feature type="binding site" evidence="4">
    <location>
        <position position="52"/>
    </location>
    <ligand>
        <name>ATP</name>
        <dbReference type="ChEBI" id="CHEBI:30616"/>
    </ligand>
</feature>
<feature type="modified residue" description="Phosphothreonine" evidence="1">
    <location>
        <position position="174"/>
    </location>
</feature>
<feature type="modified residue" description="Phosphotyrosine" evidence="1">
    <location>
        <position position="176"/>
    </location>
</feature>
<feature type="sequence conflict" description="In Ref. 1; AAF24231." evidence="9" ref="1">
    <original>S</original>
    <variation>T</variation>
    <location>
        <position position="272"/>
    </location>
</feature>
<reference key="1">
    <citation type="journal article" date="2000" name="Yeast">
        <title>Isolation and sequence of the HOG1 homolog from Debaryomyces hansenii by complementation of hog1 Delta strain of Saccharomyces cerevisiae.</title>
        <authorList>
            <person name="Bansal P.K."/>
            <person name="Mondal A.K."/>
        </authorList>
    </citation>
    <scope>NUCLEOTIDE SEQUENCE [GENOMIC DNA]</scope>
    <scope>FUNCTION</scope>
    <source>
        <strain>MTCC 234</strain>
    </source>
</reference>
<reference key="2">
    <citation type="journal article" date="2004" name="Nature">
        <title>Genome evolution in yeasts.</title>
        <authorList>
            <person name="Dujon B."/>
            <person name="Sherman D."/>
            <person name="Fischer G."/>
            <person name="Durrens P."/>
            <person name="Casaregola S."/>
            <person name="Lafontaine I."/>
            <person name="de Montigny J."/>
            <person name="Marck C."/>
            <person name="Neuveglise C."/>
            <person name="Talla E."/>
            <person name="Goffard N."/>
            <person name="Frangeul L."/>
            <person name="Aigle M."/>
            <person name="Anthouard V."/>
            <person name="Babour A."/>
            <person name="Barbe V."/>
            <person name="Barnay S."/>
            <person name="Blanchin S."/>
            <person name="Beckerich J.-M."/>
            <person name="Beyne E."/>
            <person name="Bleykasten C."/>
            <person name="Boisrame A."/>
            <person name="Boyer J."/>
            <person name="Cattolico L."/>
            <person name="Confanioleri F."/>
            <person name="de Daruvar A."/>
            <person name="Despons L."/>
            <person name="Fabre E."/>
            <person name="Fairhead C."/>
            <person name="Ferry-Dumazet H."/>
            <person name="Groppi A."/>
            <person name="Hantraye F."/>
            <person name="Hennequin C."/>
            <person name="Jauniaux N."/>
            <person name="Joyet P."/>
            <person name="Kachouri R."/>
            <person name="Kerrest A."/>
            <person name="Koszul R."/>
            <person name="Lemaire M."/>
            <person name="Lesur I."/>
            <person name="Ma L."/>
            <person name="Muller H."/>
            <person name="Nicaud J.-M."/>
            <person name="Nikolski M."/>
            <person name="Oztas S."/>
            <person name="Ozier-Kalogeropoulos O."/>
            <person name="Pellenz S."/>
            <person name="Potier S."/>
            <person name="Richard G.-F."/>
            <person name="Straub M.-L."/>
            <person name="Suleau A."/>
            <person name="Swennen D."/>
            <person name="Tekaia F."/>
            <person name="Wesolowski-Louvel M."/>
            <person name="Westhof E."/>
            <person name="Wirth B."/>
            <person name="Zeniou-Meyer M."/>
            <person name="Zivanovic Y."/>
            <person name="Bolotin-Fukuhara M."/>
            <person name="Thierry A."/>
            <person name="Bouchier C."/>
            <person name="Caudron B."/>
            <person name="Scarpelli C."/>
            <person name="Gaillardin C."/>
            <person name="Weissenbach J."/>
            <person name="Wincker P."/>
            <person name="Souciet J.-L."/>
        </authorList>
    </citation>
    <scope>NUCLEOTIDE SEQUENCE [LARGE SCALE GENOMIC DNA]</scope>
    <source>
        <strain>ATCC 36239 / CBS 767 / BCRC 21394 / JCM 1990 / NBRC 0083 / IGC 2968</strain>
    </source>
</reference>
<reference key="3">
    <citation type="journal article" date="2005" name="Curr. Genet.">
        <title>Debaryomyces hansenii, a highly osmo-tolerant and halo-tolerant yeast, maintains activated Dhog1p in the cytoplasm during its growth under severe osmotic stress.</title>
        <authorList>
            <person name="Sharma P."/>
            <person name="Meena N."/>
            <person name="Aggarwal M."/>
            <person name="Mondal A.K."/>
        </authorList>
    </citation>
    <scope>FUNCTION</scope>
    <scope>PHOSPHORYLATION</scope>
    <scope>SUBCELLULAR LOCATION</scope>
</reference>
<comment type="function">
    <text evidence="7 8">Proline-directed serine/threonine-protein kinase involved in a signal transduction pathway that is activated by changes in the osmolarity of the extracellular environment. Controls osmotic regulation of transcription of target genes.</text>
</comment>
<comment type="catalytic activity">
    <reaction evidence="2">
        <text>L-seryl-[protein] + ATP = O-phospho-L-seryl-[protein] + ADP + H(+)</text>
        <dbReference type="Rhea" id="RHEA:17989"/>
        <dbReference type="Rhea" id="RHEA-COMP:9863"/>
        <dbReference type="Rhea" id="RHEA-COMP:11604"/>
        <dbReference type="ChEBI" id="CHEBI:15378"/>
        <dbReference type="ChEBI" id="CHEBI:29999"/>
        <dbReference type="ChEBI" id="CHEBI:30616"/>
        <dbReference type="ChEBI" id="CHEBI:83421"/>
        <dbReference type="ChEBI" id="CHEBI:456216"/>
        <dbReference type="EC" id="2.7.11.24"/>
    </reaction>
    <physiologicalReaction direction="left-to-right" evidence="2">
        <dbReference type="Rhea" id="RHEA:17990"/>
    </physiologicalReaction>
</comment>
<comment type="catalytic activity">
    <reaction evidence="2">
        <text>L-threonyl-[protein] + ATP = O-phospho-L-threonyl-[protein] + ADP + H(+)</text>
        <dbReference type="Rhea" id="RHEA:46608"/>
        <dbReference type="Rhea" id="RHEA-COMP:11060"/>
        <dbReference type="Rhea" id="RHEA-COMP:11605"/>
        <dbReference type="ChEBI" id="CHEBI:15378"/>
        <dbReference type="ChEBI" id="CHEBI:30013"/>
        <dbReference type="ChEBI" id="CHEBI:30616"/>
        <dbReference type="ChEBI" id="CHEBI:61977"/>
        <dbReference type="ChEBI" id="CHEBI:456216"/>
        <dbReference type="EC" id="2.7.11.24"/>
    </reaction>
    <physiologicalReaction direction="left-to-right" evidence="2">
        <dbReference type="Rhea" id="RHEA:46609"/>
    </physiologicalReaction>
</comment>
<comment type="cofactor">
    <cofactor evidence="3">
        <name>Mg(2+)</name>
        <dbReference type="ChEBI" id="CHEBI:18420"/>
    </cofactor>
</comment>
<comment type="activity regulation">
    <text>Activated by tyrosine and threonine phosphorylation.</text>
</comment>
<comment type="subcellular location">
    <subcellularLocation>
        <location evidence="8">Cytoplasm</location>
    </subcellularLocation>
    <subcellularLocation>
        <location evidence="8">Nucleus</location>
    </subcellularLocation>
    <text>In contrast to other yeasts, the nuclear translocation is delayed under severe osmotic conditions although it is activated rapidly.</text>
</comment>
<comment type="domain">
    <text>The TXY motif contains the threonine and tyrosine residues whose phosphorylation activates the MAP kinases.</text>
</comment>
<comment type="PTM">
    <text evidence="1 8">Dually phosphorylated on Thr-174 and Tyr-176, which activates the enzyme (By similarity). Phosphorylated in response of osmotic stress, oxidative stress and UV stress, but not heat stress.</text>
</comment>
<comment type="similarity">
    <text evidence="4">Belongs to the protein kinase superfamily. Ser/Thr protein kinase family. MAP kinase subfamily. HOG1 sub-subfamily.</text>
</comment>
<keyword id="KW-0010">Activator</keyword>
<keyword id="KW-0067">ATP-binding</keyword>
<keyword id="KW-0963">Cytoplasm</keyword>
<keyword id="KW-0418">Kinase</keyword>
<keyword id="KW-0547">Nucleotide-binding</keyword>
<keyword id="KW-0539">Nucleus</keyword>
<keyword id="KW-0597">Phosphoprotein</keyword>
<keyword id="KW-1185">Reference proteome</keyword>
<keyword id="KW-0723">Serine/threonine-protein kinase</keyword>
<keyword id="KW-0804">Transcription</keyword>
<keyword id="KW-0805">Transcription regulation</keyword>
<keyword id="KW-0808">Transferase</keyword>
<organism>
    <name type="scientific">Debaryomyces hansenii (strain ATCC 36239 / CBS 767 / BCRC 21394 / JCM 1990 / NBRC 0083 / IGC 2968)</name>
    <name type="common">Yeast</name>
    <name type="synonym">Torulaspora hansenii</name>
    <dbReference type="NCBI Taxonomy" id="284592"/>
    <lineage>
        <taxon>Eukaryota</taxon>
        <taxon>Fungi</taxon>
        <taxon>Dikarya</taxon>
        <taxon>Ascomycota</taxon>
        <taxon>Saccharomycotina</taxon>
        <taxon>Pichiomycetes</taxon>
        <taxon>Debaryomycetaceae</taxon>
        <taxon>Debaryomyces</taxon>
    </lineage>
</organism>
<gene>
    <name type="primary">HOG1</name>
    <name type="ordered locus">DEHA2E20944g</name>
</gene>
<name>HOG1_DEBHA</name>
<protein>
    <recommendedName>
        <fullName>Mitogen-activated protein kinase HOG1</fullName>
        <shortName>MAP kinase HOG1</shortName>
        <ecNumber evidence="2">2.7.11.24</ecNumber>
    </recommendedName>
</protein>
<sequence length="387" mass="44357">MVSDGEFTRTQIFGTVFEITNRYTDLNPVGMGAFGLVCSAIDKLTGQNVAVKKIMKPFSTSVLAKRTYRELKLLKHLRHENLITLDDIFLSPLEDIYFVTELQGTDLHRLLTSRPLEKQFIQYFTYQILRGLKYVHSAGVIHRDLKPSNILINENCDLKICDFGLARIQDPQMTGYVSTRYYRAPEIMLTWQKYDTEVDLWSVGCILSEMIEGKPLFPGKDHVHQFSIITELLGSPPPDVIETICSENTLRFVQSLPHRDPIPFSERFAQCSHVEPEAIDLLAKMLIFDPKKRISALDALSHPYMEPYHDPTDEPVCEVKFDWSFNDADLPVDTWRVMMYSEILDFHQIIGAGANGTTQEQMAQIQQEGIQAPSSQYQQTNQEQKVE</sequence>
<proteinExistence type="evidence at protein level"/>
<accession>Q9UV50</accession>
<accession>Q6BNK7</accession>
<evidence type="ECO:0000250" key="1"/>
<evidence type="ECO:0000250" key="2">
    <source>
        <dbReference type="UniProtKB" id="P32485"/>
    </source>
</evidence>
<evidence type="ECO:0000250" key="3">
    <source>
        <dbReference type="UniProtKB" id="Q16539"/>
    </source>
</evidence>
<evidence type="ECO:0000255" key="4">
    <source>
        <dbReference type="PROSITE-ProRule" id="PRU00159"/>
    </source>
</evidence>
<evidence type="ECO:0000255" key="5">
    <source>
        <dbReference type="PROSITE-ProRule" id="PRU10027"/>
    </source>
</evidence>
<evidence type="ECO:0000256" key="6">
    <source>
        <dbReference type="SAM" id="MobiDB-lite"/>
    </source>
</evidence>
<evidence type="ECO:0000269" key="7">
    <source>
    </source>
</evidence>
<evidence type="ECO:0000269" key="8">
    <source>
    </source>
</evidence>
<evidence type="ECO:0000305" key="9"/>